<dbReference type="PDB" id="1TXJ">
    <property type="method" value="X-ray"/>
    <property type="resolution" value="2.00 A"/>
    <property type="chains" value="A=1-171"/>
</dbReference>
<dbReference type="PDBsum" id="1TXJ"/>
<dbReference type="SMR" id="P84152"/>
<dbReference type="VEuPathDB" id="PlasmoDB:PKA1H_100027700"/>
<dbReference type="VEuPathDB" id="PlasmoDB:PKNH_1022600"/>
<dbReference type="VEuPathDB" id="PlasmoDB:PKNOH_S07460700"/>
<dbReference type="eggNOG" id="KOG1727">
    <property type="taxonomic scope" value="Eukaryota"/>
</dbReference>
<dbReference type="EvolutionaryTrace" id="P84152"/>
<dbReference type="GO" id="GO:0005737">
    <property type="term" value="C:cytoplasm"/>
    <property type="evidence" value="ECO:0007669"/>
    <property type="project" value="UniProtKB-SubCell"/>
</dbReference>
<dbReference type="GO" id="GO:0005509">
    <property type="term" value="F:calcium ion binding"/>
    <property type="evidence" value="ECO:0007669"/>
    <property type="project" value="TreeGrafter"/>
</dbReference>
<dbReference type="Gene3D" id="2.170.150.10">
    <property type="entry name" value="Metal Binding Protein, Guanine Nucleotide Exchange Factor, Chain A"/>
    <property type="match status" value="1"/>
</dbReference>
<dbReference type="InterPro" id="IPR011057">
    <property type="entry name" value="Mss4-like_sf"/>
</dbReference>
<dbReference type="InterPro" id="IPR011323">
    <property type="entry name" value="Mss4/transl-control_tumour"/>
</dbReference>
<dbReference type="InterPro" id="IPR034737">
    <property type="entry name" value="TCTP"/>
</dbReference>
<dbReference type="InterPro" id="IPR018105">
    <property type="entry name" value="Translational_control_tumour_p"/>
</dbReference>
<dbReference type="PANTHER" id="PTHR11991">
    <property type="entry name" value="TRANSLATIONALLY CONTROLLED TUMOR PROTEIN-RELATED"/>
    <property type="match status" value="1"/>
</dbReference>
<dbReference type="PANTHER" id="PTHR11991:SF0">
    <property type="entry name" value="TRANSLATIONALLY-CONTROLLED TUMOR PROTEIN"/>
    <property type="match status" value="1"/>
</dbReference>
<dbReference type="Pfam" id="PF00838">
    <property type="entry name" value="TCTP"/>
    <property type="match status" value="1"/>
</dbReference>
<dbReference type="PRINTS" id="PR01653">
    <property type="entry name" value="TCTPROTEIN"/>
</dbReference>
<dbReference type="SUPFAM" id="SSF51316">
    <property type="entry name" value="Mss4-like"/>
    <property type="match status" value="1"/>
</dbReference>
<dbReference type="PROSITE" id="PS51797">
    <property type="entry name" value="TCTP_3"/>
    <property type="match status" value="1"/>
</dbReference>
<reference evidence="3" key="1">
    <citation type="submission" date="2004-07" db="PDB data bank">
        <title>Crystal structure and biophysical characterization of translationally controlled tumour-associated protein (TCTP) from Plasmodium knowlesi.</title>
        <authorList>
            <person name="Walker J.R."/>
            <person name="Vedadi M."/>
            <person name="Sharma S."/>
            <person name="Houston S."/>
            <person name="Lew J."/>
            <person name="Amani M."/>
            <person name="Wasney G."/>
            <person name="Skarina T."/>
            <person name="Bray J."/>
            <person name="Hui R."/>
        </authorList>
    </citation>
    <scope>X-RAY CRYSTALLOGRAPHY (2.0 ANGSTROMS)</scope>
</reference>
<name>TCTP_PLAKN</name>
<organism>
    <name type="scientific">Plasmodium knowlesi</name>
    <dbReference type="NCBI Taxonomy" id="5850"/>
    <lineage>
        <taxon>Eukaryota</taxon>
        <taxon>Sar</taxon>
        <taxon>Alveolata</taxon>
        <taxon>Apicomplexa</taxon>
        <taxon>Aconoidasida</taxon>
        <taxon>Haemosporida</taxon>
        <taxon>Plasmodiidae</taxon>
        <taxon>Plasmodium</taxon>
        <taxon>Plasmodium (Plasmodium)</taxon>
    </lineage>
</organism>
<evidence type="ECO:0000250" key="1"/>
<evidence type="ECO:0000255" key="2">
    <source>
        <dbReference type="PROSITE-ProRule" id="PRU01133"/>
    </source>
</evidence>
<evidence type="ECO:0000312" key="3">
    <source>
        <dbReference type="PDB" id="1TXJ"/>
    </source>
</evidence>
<evidence type="ECO:0007829" key="4">
    <source>
        <dbReference type="PDB" id="1TXJ"/>
    </source>
</evidence>
<proteinExistence type="evidence at protein level"/>
<accession>P84152</accession>
<feature type="chain" id="PRO_0000211292" description="Translationally-controlled tumor protein homolog">
    <location>
        <begin position="1"/>
        <end position="171"/>
    </location>
</feature>
<feature type="domain" description="TCTP" evidence="2">
    <location>
        <begin position="1"/>
        <end position="171"/>
    </location>
</feature>
<feature type="strand" evidence="4">
    <location>
        <begin position="2"/>
        <end position="6"/>
    </location>
</feature>
<feature type="turn" evidence="4">
    <location>
        <begin position="7"/>
        <end position="9"/>
    </location>
</feature>
<feature type="strand" evidence="4">
    <location>
        <begin position="12"/>
        <end position="15"/>
    </location>
</feature>
<feature type="helix" evidence="4">
    <location>
        <begin position="23"/>
        <end position="25"/>
    </location>
</feature>
<feature type="helix" evidence="4">
    <location>
        <begin position="27"/>
        <end position="29"/>
    </location>
</feature>
<feature type="turn" evidence="4">
    <location>
        <begin position="30"/>
        <end position="32"/>
    </location>
</feature>
<feature type="strand" evidence="4">
    <location>
        <begin position="33"/>
        <end position="37"/>
    </location>
</feature>
<feature type="strand" evidence="4">
    <location>
        <begin position="40"/>
        <end position="43"/>
    </location>
</feature>
<feature type="strand" evidence="4">
    <location>
        <begin position="67"/>
        <end position="69"/>
    </location>
</feature>
<feature type="helix" evidence="4">
    <location>
        <begin position="70"/>
        <end position="75"/>
    </location>
</feature>
<feature type="strand" evidence="4">
    <location>
        <begin position="78"/>
        <end position="80"/>
    </location>
</feature>
<feature type="helix" evidence="4">
    <location>
        <begin position="84"/>
        <end position="105"/>
    </location>
</feature>
<feature type="helix" evidence="4">
    <location>
        <begin position="107"/>
        <end position="109"/>
    </location>
</feature>
<feature type="helix" evidence="4">
    <location>
        <begin position="110"/>
        <end position="126"/>
    </location>
</feature>
<feature type="helix" evidence="4">
    <location>
        <begin position="128"/>
        <end position="130"/>
    </location>
</feature>
<feature type="strand" evidence="4">
    <location>
        <begin position="132"/>
        <end position="135"/>
    </location>
</feature>
<feature type="strand" evidence="4">
    <location>
        <begin position="146"/>
        <end position="149"/>
    </location>
</feature>
<feature type="strand" evidence="4">
    <location>
        <begin position="158"/>
        <end position="162"/>
    </location>
</feature>
<feature type="helix" evidence="4">
    <location>
        <begin position="163"/>
        <end position="165"/>
    </location>
</feature>
<feature type="strand" evidence="4">
    <location>
        <begin position="166"/>
        <end position="170"/>
    </location>
</feature>
<comment type="function">
    <text evidence="1">Involved in calcium binding and microtubule stabilization.</text>
</comment>
<comment type="subcellular location">
    <subcellularLocation>
        <location evidence="1">Cytoplasm</location>
    </subcellularLocation>
</comment>
<comment type="similarity">
    <text evidence="2">Belongs to the TCTP family.</text>
</comment>
<gene>
    <name type="primary">TCTP</name>
</gene>
<protein>
    <recommendedName>
        <fullName>Translationally-controlled tumor protein homolog</fullName>
        <shortName>TCTP</shortName>
    </recommendedName>
</protein>
<sequence length="171" mass="19854">MKVYKDVFTNDEVCSDSYNQEDPFGIADFREIAFEVKSNKRIKGNDDYGIADNSEEAVDGMGADVEQVIDIVDSFQLTSTSLSKKEYSVYIKNYMQKILKYLEEKKPDRVDVFKTKAQPLIKHILTNFDDFEFYMGESLDMDAGLTYSYYKGEEVTPRFVYISDGLYEEKF</sequence>
<keyword id="KW-0002">3D-structure</keyword>
<keyword id="KW-0106">Calcium</keyword>
<keyword id="KW-0963">Cytoplasm</keyword>